<comment type="function">
    <text evidence="1">This protein binds specifically to 23S rRNA; its binding is stimulated by other ribosomal proteins, e.g. L4, L17, and L20. It is important during the early stages of 50S assembly. It makes multiple contacts with different domains of the 23S rRNA in the assembled 50S subunit and ribosome (By similarity).</text>
</comment>
<comment type="function">
    <text evidence="1">The globular domain of the protein is located near the polypeptide exit tunnel on the outside of the subunit, while an extended beta-hairpin is found that lines the wall of the exit tunnel in the center of the 70S ribosome.</text>
</comment>
<comment type="subunit">
    <text evidence="1">Part of the 50S ribosomal subunit.</text>
</comment>
<comment type="similarity">
    <text evidence="1">Belongs to the universal ribosomal protein uL22 family.</text>
</comment>
<reference key="1">
    <citation type="submission" date="2007-11" db="EMBL/GenBank/DDBJ databases">
        <title>Genome sequencing of phylogenetically and phenotypically diverse Coxiella burnetii isolates.</title>
        <authorList>
            <person name="Seshadri R."/>
            <person name="Samuel J.E."/>
        </authorList>
    </citation>
    <scope>NUCLEOTIDE SEQUENCE [LARGE SCALE GENOMIC DNA]</scope>
    <source>
        <strain>RSA 331 / Henzerling II</strain>
    </source>
</reference>
<name>RL22_COXBR</name>
<gene>
    <name evidence="1" type="primary">rplV</name>
    <name type="ordered locus">COXBURSA331_A0342</name>
</gene>
<feature type="chain" id="PRO_1000086551" description="Large ribosomal subunit protein uL22">
    <location>
        <begin position="1"/>
        <end position="115"/>
    </location>
</feature>
<proteinExistence type="inferred from homology"/>
<sequence length="115" mass="12582">MEVAAKLKYARISAQKARLVADQVRGLGAEQAVNLLRFSNKKAAALMKKVLDSAIANAEHNEGADIDELKVSTVMVDEGPSARRFHARARGRANQILKRTCHITVKVSDSQVEND</sequence>
<dbReference type="EMBL" id="CP000890">
    <property type="protein sequence ID" value="ABX78239.1"/>
    <property type="molecule type" value="Genomic_DNA"/>
</dbReference>
<dbReference type="RefSeq" id="WP_010957457.1">
    <property type="nucleotide sequence ID" value="NC_010117.1"/>
</dbReference>
<dbReference type="SMR" id="A9NAM9"/>
<dbReference type="KEGG" id="cbs:COXBURSA331_A0342"/>
<dbReference type="HOGENOM" id="CLU_083987_3_3_6"/>
<dbReference type="GO" id="GO:0022625">
    <property type="term" value="C:cytosolic large ribosomal subunit"/>
    <property type="evidence" value="ECO:0007669"/>
    <property type="project" value="TreeGrafter"/>
</dbReference>
<dbReference type="GO" id="GO:0019843">
    <property type="term" value="F:rRNA binding"/>
    <property type="evidence" value="ECO:0007669"/>
    <property type="project" value="UniProtKB-UniRule"/>
</dbReference>
<dbReference type="GO" id="GO:0003735">
    <property type="term" value="F:structural constituent of ribosome"/>
    <property type="evidence" value="ECO:0007669"/>
    <property type="project" value="InterPro"/>
</dbReference>
<dbReference type="GO" id="GO:0006412">
    <property type="term" value="P:translation"/>
    <property type="evidence" value="ECO:0007669"/>
    <property type="project" value="UniProtKB-UniRule"/>
</dbReference>
<dbReference type="CDD" id="cd00336">
    <property type="entry name" value="Ribosomal_L22"/>
    <property type="match status" value="1"/>
</dbReference>
<dbReference type="FunFam" id="3.90.470.10:FF:000001">
    <property type="entry name" value="50S ribosomal protein L22"/>
    <property type="match status" value="1"/>
</dbReference>
<dbReference type="Gene3D" id="3.90.470.10">
    <property type="entry name" value="Ribosomal protein L22/L17"/>
    <property type="match status" value="1"/>
</dbReference>
<dbReference type="HAMAP" id="MF_01331_B">
    <property type="entry name" value="Ribosomal_uL22_B"/>
    <property type="match status" value="1"/>
</dbReference>
<dbReference type="InterPro" id="IPR001063">
    <property type="entry name" value="Ribosomal_uL22"/>
</dbReference>
<dbReference type="InterPro" id="IPR005727">
    <property type="entry name" value="Ribosomal_uL22_bac/chlpt-type"/>
</dbReference>
<dbReference type="InterPro" id="IPR047867">
    <property type="entry name" value="Ribosomal_uL22_bac/org-type"/>
</dbReference>
<dbReference type="InterPro" id="IPR018260">
    <property type="entry name" value="Ribosomal_uL22_CS"/>
</dbReference>
<dbReference type="InterPro" id="IPR036394">
    <property type="entry name" value="Ribosomal_uL22_sf"/>
</dbReference>
<dbReference type="NCBIfam" id="TIGR01044">
    <property type="entry name" value="rplV_bact"/>
    <property type="match status" value="1"/>
</dbReference>
<dbReference type="PANTHER" id="PTHR13501">
    <property type="entry name" value="CHLOROPLAST 50S RIBOSOMAL PROTEIN L22-RELATED"/>
    <property type="match status" value="1"/>
</dbReference>
<dbReference type="PANTHER" id="PTHR13501:SF8">
    <property type="entry name" value="LARGE RIBOSOMAL SUBUNIT PROTEIN UL22M"/>
    <property type="match status" value="1"/>
</dbReference>
<dbReference type="Pfam" id="PF00237">
    <property type="entry name" value="Ribosomal_L22"/>
    <property type="match status" value="1"/>
</dbReference>
<dbReference type="SUPFAM" id="SSF54843">
    <property type="entry name" value="Ribosomal protein L22"/>
    <property type="match status" value="1"/>
</dbReference>
<dbReference type="PROSITE" id="PS00464">
    <property type="entry name" value="RIBOSOMAL_L22"/>
    <property type="match status" value="1"/>
</dbReference>
<keyword id="KW-0687">Ribonucleoprotein</keyword>
<keyword id="KW-0689">Ribosomal protein</keyword>
<keyword id="KW-0694">RNA-binding</keyword>
<keyword id="KW-0699">rRNA-binding</keyword>
<accession>A9NAM9</accession>
<evidence type="ECO:0000255" key="1">
    <source>
        <dbReference type="HAMAP-Rule" id="MF_01331"/>
    </source>
</evidence>
<evidence type="ECO:0000305" key="2"/>
<protein>
    <recommendedName>
        <fullName evidence="1">Large ribosomal subunit protein uL22</fullName>
    </recommendedName>
    <alternativeName>
        <fullName evidence="2">50S ribosomal protein L22</fullName>
    </alternativeName>
</protein>
<organism>
    <name type="scientific">Coxiella burnetii (strain RSA 331 / Henzerling II)</name>
    <dbReference type="NCBI Taxonomy" id="360115"/>
    <lineage>
        <taxon>Bacteria</taxon>
        <taxon>Pseudomonadati</taxon>
        <taxon>Pseudomonadota</taxon>
        <taxon>Gammaproteobacteria</taxon>
        <taxon>Legionellales</taxon>
        <taxon>Coxiellaceae</taxon>
        <taxon>Coxiella</taxon>
    </lineage>
</organism>